<name>LAP4B_MOUSE</name>
<reference key="1">
    <citation type="submission" date="2000-10" db="EMBL/GenBank/DDBJ databases">
        <authorList>
            <person name="Hogue D.L."/>
        </authorList>
    </citation>
    <scope>NUCLEOTIDE SEQUENCE [MRNA]</scope>
    <source>
        <strain>C57BL/6J</strain>
        <tissue>Brain</tissue>
    </source>
</reference>
<reference key="2">
    <citation type="journal article" date="2005" name="Science">
        <title>The transcriptional landscape of the mammalian genome.</title>
        <authorList>
            <person name="Carninci P."/>
            <person name="Kasukawa T."/>
            <person name="Katayama S."/>
            <person name="Gough J."/>
            <person name="Frith M.C."/>
            <person name="Maeda N."/>
            <person name="Oyama R."/>
            <person name="Ravasi T."/>
            <person name="Lenhard B."/>
            <person name="Wells C."/>
            <person name="Kodzius R."/>
            <person name="Shimokawa K."/>
            <person name="Bajic V.B."/>
            <person name="Brenner S.E."/>
            <person name="Batalov S."/>
            <person name="Forrest A.R."/>
            <person name="Zavolan M."/>
            <person name="Davis M.J."/>
            <person name="Wilming L.G."/>
            <person name="Aidinis V."/>
            <person name="Allen J.E."/>
            <person name="Ambesi-Impiombato A."/>
            <person name="Apweiler R."/>
            <person name="Aturaliya R.N."/>
            <person name="Bailey T.L."/>
            <person name="Bansal M."/>
            <person name="Baxter L."/>
            <person name="Beisel K.W."/>
            <person name="Bersano T."/>
            <person name="Bono H."/>
            <person name="Chalk A.M."/>
            <person name="Chiu K.P."/>
            <person name="Choudhary V."/>
            <person name="Christoffels A."/>
            <person name="Clutterbuck D.R."/>
            <person name="Crowe M.L."/>
            <person name="Dalla E."/>
            <person name="Dalrymple B.P."/>
            <person name="de Bono B."/>
            <person name="Della Gatta G."/>
            <person name="di Bernardo D."/>
            <person name="Down T."/>
            <person name="Engstrom P."/>
            <person name="Fagiolini M."/>
            <person name="Faulkner G."/>
            <person name="Fletcher C.F."/>
            <person name="Fukushima T."/>
            <person name="Furuno M."/>
            <person name="Futaki S."/>
            <person name="Gariboldi M."/>
            <person name="Georgii-Hemming P."/>
            <person name="Gingeras T.R."/>
            <person name="Gojobori T."/>
            <person name="Green R.E."/>
            <person name="Gustincich S."/>
            <person name="Harbers M."/>
            <person name="Hayashi Y."/>
            <person name="Hensch T.K."/>
            <person name="Hirokawa N."/>
            <person name="Hill D."/>
            <person name="Huminiecki L."/>
            <person name="Iacono M."/>
            <person name="Ikeo K."/>
            <person name="Iwama A."/>
            <person name="Ishikawa T."/>
            <person name="Jakt M."/>
            <person name="Kanapin A."/>
            <person name="Katoh M."/>
            <person name="Kawasawa Y."/>
            <person name="Kelso J."/>
            <person name="Kitamura H."/>
            <person name="Kitano H."/>
            <person name="Kollias G."/>
            <person name="Krishnan S.P."/>
            <person name="Kruger A."/>
            <person name="Kummerfeld S.K."/>
            <person name="Kurochkin I.V."/>
            <person name="Lareau L.F."/>
            <person name="Lazarevic D."/>
            <person name="Lipovich L."/>
            <person name="Liu J."/>
            <person name="Liuni S."/>
            <person name="McWilliam S."/>
            <person name="Madan Babu M."/>
            <person name="Madera M."/>
            <person name="Marchionni L."/>
            <person name="Matsuda H."/>
            <person name="Matsuzawa S."/>
            <person name="Miki H."/>
            <person name="Mignone F."/>
            <person name="Miyake S."/>
            <person name="Morris K."/>
            <person name="Mottagui-Tabar S."/>
            <person name="Mulder N."/>
            <person name="Nakano N."/>
            <person name="Nakauchi H."/>
            <person name="Ng P."/>
            <person name="Nilsson R."/>
            <person name="Nishiguchi S."/>
            <person name="Nishikawa S."/>
            <person name="Nori F."/>
            <person name="Ohara O."/>
            <person name="Okazaki Y."/>
            <person name="Orlando V."/>
            <person name="Pang K.C."/>
            <person name="Pavan W.J."/>
            <person name="Pavesi G."/>
            <person name="Pesole G."/>
            <person name="Petrovsky N."/>
            <person name="Piazza S."/>
            <person name="Reed J."/>
            <person name="Reid J.F."/>
            <person name="Ring B.Z."/>
            <person name="Ringwald M."/>
            <person name="Rost B."/>
            <person name="Ruan Y."/>
            <person name="Salzberg S.L."/>
            <person name="Sandelin A."/>
            <person name="Schneider C."/>
            <person name="Schoenbach C."/>
            <person name="Sekiguchi K."/>
            <person name="Semple C.A."/>
            <person name="Seno S."/>
            <person name="Sessa L."/>
            <person name="Sheng Y."/>
            <person name="Shibata Y."/>
            <person name="Shimada H."/>
            <person name="Shimada K."/>
            <person name="Silva D."/>
            <person name="Sinclair B."/>
            <person name="Sperling S."/>
            <person name="Stupka E."/>
            <person name="Sugiura K."/>
            <person name="Sultana R."/>
            <person name="Takenaka Y."/>
            <person name="Taki K."/>
            <person name="Tammoja K."/>
            <person name="Tan S.L."/>
            <person name="Tang S."/>
            <person name="Taylor M.S."/>
            <person name="Tegner J."/>
            <person name="Teichmann S.A."/>
            <person name="Ueda H.R."/>
            <person name="van Nimwegen E."/>
            <person name="Verardo R."/>
            <person name="Wei C.L."/>
            <person name="Yagi K."/>
            <person name="Yamanishi H."/>
            <person name="Zabarovsky E."/>
            <person name="Zhu S."/>
            <person name="Zimmer A."/>
            <person name="Hide W."/>
            <person name="Bult C."/>
            <person name="Grimmond S.M."/>
            <person name="Teasdale R.D."/>
            <person name="Liu E.T."/>
            <person name="Brusic V."/>
            <person name="Quackenbush J."/>
            <person name="Wahlestedt C."/>
            <person name="Mattick J.S."/>
            <person name="Hume D.A."/>
            <person name="Kai C."/>
            <person name="Sasaki D."/>
            <person name="Tomaru Y."/>
            <person name="Fukuda S."/>
            <person name="Kanamori-Katayama M."/>
            <person name="Suzuki M."/>
            <person name="Aoki J."/>
            <person name="Arakawa T."/>
            <person name="Iida J."/>
            <person name="Imamura K."/>
            <person name="Itoh M."/>
            <person name="Kato T."/>
            <person name="Kawaji H."/>
            <person name="Kawagashira N."/>
            <person name="Kawashima T."/>
            <person name="Kojima M."/>
            <person name="Kondo S."/>
            <person name="Konno H."/>
            <person name="Nakano K."/>
            <person name="Ninomiya N."/>
            <person name="Nishio T."/>
            <person name="Okada M."/>
            <person name="Plessy C."/>
            <person name="Shibata K."/>
            <person name="Shiraki T."/>
            <person name="Suzuki S."/>
            <person name="Tagami M."/>
            <person name="Waki K."/>
            <person name="Watahiki A."/>
            <person name="Okamura-Oho Y."/>
            <person name="Suzuki H."/>
            <person name="Kawai J."/>
            <person name="Hayashizaki Y."/>
        </authorList>
    </citation>
    <scope>NUCLEOTIDE SEQUENCE [LARGE SCALE MRNA]</scope>
    <source>
        <strain>C57BL/6J</strain>
        <tissue>Hypothalamus</tissue>
        <tissue>Testis</tissue>
    </source>
</reference>
<reference key="3">
    <citation type="journal article" date="2004" name="Genome Res.">
        <title>The status, quality, and expansion of the NIH full-length cDNA project: the Mammalian Gene Collection (MGC).</title>
        <authorList>
            <consortium name="The MGC Project Team"/>
        </authorList>
    </citation>
    <scope>NUCLEOTIDE SEQUENCE [LARGE SCALE MRNA]</scope>
    <source>
        <tissue>Eye</tissue>
    </source>
</reference>
<feature type="chain" id="PRO_0000249723" description="Lysosomal-associated transmembrane protein 4B">
    <location>
        <begin position="1"/>
        <end position="227"/>
    </location>
</feature>
<feature type="transmembrane region" description="Helical" evidence="2">
    <location>
        <begin position="26"/>
        <end position="46"/>
    </location>
</feature>
<feature type="transmembrane region" description="Helical" evidence="2">
    <location>
        <begin position="72"/>
        <end position="92"/>
    </location>
</feature>
<feature type="transmembrane region" description="Helical" evidence="2">
    <location>
        <begin position="100"/>
        <end position="120"/>
    </location>
</feature>
<feature type="transmembrane region" description="Helical" evidence="2">
    <location>
        <begin position="153"/>
        <end position="173"/>
    </location>
</feature>
<feature type="region of interest" description="Required for NEDD4 interaction" evidence="1">
    <location>
        <begin position="205"/>
        <end position="222"/>
    </location>
</feature>
<comment type="function">
    <text evidence="1">Required for optimal lysosomal function. Blocks EGF-stimulated EGFR intraluminal sorting and degradation. Conversely by binding with the phosphatidylinositol 4,5-bisphosphate, regulates its PIP5K1C interaction, inhibits HGS ubiquitination and relieves LAPTM4B inhibition of EGFR degradation. Recruits SLC3A2 and SLC7A5 (the Leu transporter) to the lysosome, promoting entry of leucine and other essential amino acid (EAA) into the lysosome, stimulating activation of proton-transporting vacuolar (V)-ATPase protein pump (V-ATPase) and hence mTORC1 activation. Plays a role as negative regulator of TGFB1 production in regulatory T cells. Binds ceramide and facilitates its exit from late endosome in order to control cell death pathways.</text>
</comment>
<comment type="subunit">
    <text evidence="1">Homooligomer; upon reaching the lysosomes. Interacts with MCOLN1. Interacts with NEDD4; may play a role in the lysosomal sorting of LAPTM4B; enhances HGS association with NEDD4; mediates inhibition of EGFR degradation. Interacts with PIP5K1C; promotes SNX5 association with LAPTM4B; kinase activity of PIP5K1C is required; interaction is regulated by phosphatidylinositol 4,5-bisphosphate generated by PIP5K1C. Interacts with HGS; promotes HGS ubiquitination. Interacts with SNX5. Interacts with SLC3A2 and SLC7A5; recruits SLC3A2 and SLC7A5 to lysosomes to promote leucine uptake into these organelles and is required for mTORC1 activation. Interacts with LRRC32; decreases TGFB1 production in regulatory T cells. Interacts with BECN1; competes with EGFR for LAPTM4B binding; regulates EGFR activity. Interacts with EGFR; positively correlates with EGFR activation.</text>
</comment>
<comment type="subcellular location">
    <subcellularLocation>
        <location evidence="1">Endomembrane system</location>
        <topology evidence="1">Multi-pass membrane protein</topology>
    </subcellularLocation>
    <subcellularLocation>
        <location evidence="1">Late endosome membrane</location>
    </subcellularLocation>
    <subcellularLocation>
        <location evidence="1">Cell membrane</location>
    </subcellularLocation>
    <subcellularLocation>
        <location evidence="1">Cell projection</location>
    </subcellularLocation>
    <subcellularLocation>
        <location evidence="1">Lysosome membrane</location>
    </subcellularLocation>
    <subcellularLocation>
        <location evidence="1">Endosome membrane</location>
    </subcellularLocation>
    <subcellularLocation>
        <location evidence="1">Endosome</location>
        <location evidence="1">Multivesicular body membrane</location>
    </subcellularLocation>
    <subcellularLocation>
        <location evidence="1">Endosome</location>
        <location evidence="1">Multivesicular body lumen</location>
    </subcellularLocation>
</comment>
<comment type="PTM">
    <text evidence="1">Undergoes proteolytic cleavage following delivery to the lysosomes.</text>
</comment>
<comment type="PTM">
    <text evidence="1">Ubiquitinated by NEDD4.</text>
</comment>
<comment type="similarity">
    <text evidence="3">Belongs to the LAPTM4/LAPTM5 transporter family.</text>
</comment>
<accession>Q91XQ6</accession>
<dbReference type="EMBL" id="AF317418">
    <property type="protein sequence ID" value="AAK69596.1"/>
    <property type="molecule type" value="mRNA"/>
</dbReference>
<dbReference type="EMBL" id="AK077269">
    <property type="protein sequence ID" value="BAC36721.1"/>
    <property type="molecule type" value="mRNA"/>
</dbReference>
<dbReference type="EMBL" id="AK077933">
    <property type="protein sequence ID" value="BAC37072.1"/>
    <property type="molecule type" value="mRNA"/>
</dbReference>
<dbReference type="EMBL" id="AK079581">
    <property type="protein sequence ID" value="BAC37691.1"/>
    <property type="molecule type" value="mRNA"/>
</dbReference>
<dbReference type="EMBL" id="AK082807">
    <property type="protein sequence ID" value="BAC38630.1"/>
    <property type="molecule type" value="mRNA"/>
</dbReference>
<dbReference type="EMBL" id="BC019120">
    <property type="protein sequence ID" value="AAH19120.1"/>
    <property type="molecule type" value="mRNA"/>
</dbReference>
<dbReference type="CCDS" id="CCDS27416.1"/>
<dbReference type="RefSeq" id="NP_277056.1">
    <property type="nucleotide sequence ID" value="NM_033521.4"/>
</dbReference>
<dbReference type="FunCoup" id="Q91XQ6">
    <property type="interactions" value="988"/>
</dbReference>
<dbReference type="STRING" id="10090.ENSMUSP00000022867"/>
<dbReference type="iPTMnet" id="Q91XQ6"/>
<dbReference type="PhosphoSitePlus" id="Q91XQ6"/>
<dbReference type="SwissPalm" id="Q91XQ6"/>
<dbReference type="PaxDb" id="10090-ENSMUSP00000022867"/>
<dbReference type="ProteomicsDB" id="264832"/>
<dbReference type="Antibodypedia" id="26024">
    <property type="antibodies" value="151 antibodies from 27 providers"/>
</dbReference>
<dbReference type="DNASU" id="114128"/>
<dbReference type="Ensembl" id="ENSMUST00000022867.5">
    <property type="protein sequence ID" value="ENSMUSP00000022867.4"/>
    <property type="gene ID" value="ENSMUSG00000022257.5"/>
</dbReference>
<dbReference type="GeneID" id="114128"/>
<dbReference type="KEGG" id="mmu:114128"/>
<dbReference type="UCSC" id="uc007vlj.1">
    <property type="organism name" value="mouse"/>
</dbReference>
<dbReference type="AGR" id="MGI:1890494"/>
<dbReference type="CTD" id="55353"/>
<dbReference type="MGI" id="MGI:1890494">
    <property type="gene designation" value="Laptm4b"/>
</dbReference>
<dbReference type="VEuPathDB" id="HostDB:ENSMUSG00000022257"/>
<dbReference type="eggNOG" id="ENOG502QSAX">
    <property type="taxonomic scope" value="Eukaryota"/>
</dbReference>
<dbReference type="GeneTree" id="ENSGT00940000153446"/>
<dbReference type="HOGENOM" id="CLU_059239_1_0_1"/>
<dbReference type="InParanoid" id="Q91XQ6"/>
<dbReference type="OMA" id="LTDPGQY"/>
<dbReference type="OrthoDB" id="10002163at2759"/>
<dbReference type="PhylomeDB" id="Q91XQ6"/>
<dbReference type="TreeFam" id="TF330843"/>
<dbReference type="BioGRID-ORCS" id="114128">
    <property type="hits" value="0 hits in 79 CRISPR screens"/>
</dbReference>
<dbReference type="ChiTaRS" id="Laptm4b">
    <property type="organism name" value="mouse"/>
</dbReference>
<dbReference type="PRO" id="PR:Q91XQ6"/>
<dbReference type="Proteomes" id="UP000000589">
    <property type="component" value="Chromosome 15"/>
</dbReference>
<dbReference type="RNAct" id="Q91XQ6">
    <property type="molecule type" value="protein"/>
</dbReference>
<dbReference type="Bgee" id="ENSMUSG00000022257">
    <property type="expression patterns" value="Expressed in motor neuron and 255 other cell types or tissues"/>
</dbReference>
<dbReference type="ExpressionAtlas" id="Q91XQ6">
    <property type="expression patterns" value="baseline and differential"/>
</dbReference>
<dbReference type="GO" id="GO:0042995">
    <property type="term" value="C:cell projection"/>
    <property type="evidence" value="ECO:0000250"/>
    <property type="project" value="UniProtKB"/>
</dbReference>
<dbReference type="GO" id="GO:0005769">
    <property type="term" value="C:early endosome"/>
    <property type="evidence" value="ECO:0000250"/>
    <property type="project" value="UniProtKB"/>
</dbReference>
<dbReference type="GO" id="GO:0005768">
    <property type="term" value="C:endosome"/>
    <property type="evidence" value="ECO:0000250"/>
    <property type="project" value="UniProtKB"/>
</dbReference>
<dbReference type="GO" id="GO:0031902">
    <property type="term" value="C:late endosome membrane"/>
    <property type="evidence" value="ECO:0000250"/>
    <property type="project" value="UniProtKB"/>
</dbReference>
<dbReference type="GO" id="GO:0005765">
    <property type="term" value="C:lysosomal membrane"/>
    <property type="evidence" value="ECO:0000250"/>
    <property type="project" value="UniProtKB"/>
</dbReference>
<dbReference type="GO" id="GO:0005764">
    <property type="term" value="C:lysosome"/>
    <property type="evidence" value="ECO:0000250"/>
    <property type="project" value="UniProtKB"/>
</dbReference>
<dbReference type="GO" id="GO:0032585">
    <property type="term" value="C:multivesicular body membrane"/>
    <property type="evidence" value="ECO:0000250"/>
    <property type="project" value="UniProtKB"/>
</dbReference>
<dbReference type="GO" id="GO:0097487">
    <property type="term" value="C:multivesicular body, internal vesicle"/>
    <property type="evidence" value="ECO:0000250"/>
    <property type="project" value="UniProtKB"/>
</dbReference>
<dbReference type="GO" id="GO:0005886">
    <property type="term" value="C:plasma membrane"/>
    <property type="evidence" value="ECO:0000250"/>
    <property type="project" value="UniProtKB"/>
</dbReference>
<dbReference type="GO" id="GO:0097001">
    <property type="term" value="F:ceramide binding"/>
    <property type="evidence" value="ECO:0000250"/>
    <property type="project" value="UniProtKB"/>
</dbReference>
<dbReference type="GO" id="GO:0019900">
    <property type="term" value="F:kinase binding"/>
    <property type="evidence" value="ECO:0007669"/>
    <property type="project" value="Ensembl"/>
</dbReference>
<dbReference type="GO" id="GO:1902936">
    <property type="term" value="F:phosphatidylinositol bisphosphate binding"/>
    <property type="evidence" value="ECO:0000250"/>
    <property type="project" value="UniProtKB"/>
</dbReference>
<dbReference type="GO" id="GO:0031625">
    <property type="term" value="F:ubiquitin protein ligase binding"/>
    <property type="evidence" value="ECO:0007669"/>
    <property type="project" value="Ensembl"/>
</dbReference>
<dbReference type="GO" id="GO:0007032">
    <property type="term" value="P:endosome organization"/>
    <property type="evidence" value="ECO:0000250"/>
    <property type="project" value="UniProtKB"/>
</dbReference>
<dbReference type="GO" id="GO:0032509">
    <property type="term" value="P:endosome transport via multivesicular body sorting pathway"/>
    <property type="evidence" value="ECO:0000250"/>
    <property type="project" value="UniProtKB"/>
</dbReference>
<dbReference type="GO" id="GO:1905166">
    <property type="term" value="P:negative regulation of lysosomal protein catabolic process"/>
    <property type="evidence" value="ECO:0000250"/>
    <property type="project" value="UniProtKB"/>
</dbReference>
<dbReference type="GO" id="GO:0032911">
    <property type="term" value="P:negative regulation of transforming growth factor beta1 production"/>
    <property type="evidence" value="ECO:0000250"/>
    <property type="project" value="UniProtKB"/>
</dbReference>
<dbReference type="GO" id="GO:0097213">
    <property type="term" value="P:regulation of lysosomal membrane permeability"/>
    <property type="evidence" value="ECO:0000250"/>
    <property type="project" value="UniProtKB"/>
</dbReference>
<dbReference type="GO" id="GO:1905671">
    <property type="term" value="P:regulation of lysosome organization"/>
    <property type="evidence" value="ECO:0000250"/>
    <property type="project" value="UniProtKB"/>
</dbReference>
<dbReference type="InterPro" id="IPR004687">
    <property type="entry name" value="LAPTM4/5"/>
</dbReference>
<dbReference type="InterPro" id="IPR051115">
    <property type="entry name" value="LAPTM_transporter"/>
</dbReference>
<dbReference type="PANTHER" id="PTHR12479">
    <property type="entry name" value="LYSOSOMAL-ASSOCIATED TRANSMEMBRANE PROTEIN"/>
    <property type="match status" value="1"/>
</dbReference>
<dbReference type="PANTHER" id="PTHR12479:SF6">
    <property type="entry name" value="LYSOSOMAL-ASSOCIATED TRANSMEMBRANE PROTEIN 4B"/>
    <property type="match status" value="1"/>
</dbReference>
<dbReference type="Pfam" id="PF03821">
    <property type="entry name" value="Mtp"/>
    <property type="match status" value="1"/>
</dbReference>
<protein>
    <recommendedName>
        <fullName evidence="1">Lysosomal-associated transmembrane protein 4B</fullName>
    </recommendedName>
</protein>
<sequence>MKMVAPWTRFYSHSCCLCCHVRTGTILLGVWYLIINAVVLLILLSALADPNQYHFSGSELGGEFEFMDDANMCIAIAISLLMILICAMATYGAYKQHAAWIIPFFCYQIFDFALNTLVAITVLVYPNSIQEYIRQLPPSFPYRDDIMSVNPTCLVLIILLFIGILLTLKGYLISCVWSCYRYINGRNSSDVLVYVTSNDTTVLLPPYDDATAVPSTAKEPPPPYVSA</sequence>
<proteinExistence type="evidence at transcript level"/>
<keyword id="KW-1003">Cell membrane</keyword>
<keyword id="KW-0966">Cell projection</keyword>
<keyword id="KW-0967">Endosome</keyword>
<keyword id="KW-0458">Lysosome</keyword>
<keyword id="KW-0472">Membrane</keyword>
<keyword id="KW-1185">Reference proteome</keyword>
<keyword id="KW-0812">Transmembrane</keyword>
<keyword id="KW-1133">Transmembrane helix</keyword>
<keyword id="KW-0813">Transport</keyword>
<keyword id="KW-0832">Ubl conjugation</keyword>
<gene>
    <name evidence="4" type="primary">Laptm4b</name>
</gene>
<evidence type="ECO:0000250" key="1">
    <source>
        <dbReference type="UniProtKB" id="Q86VI4"/>
    </source>
</evidence>
<evidence type="ECO:0000255" key="2"/>
<evidence type="ECO:0000305" key="3"/>
<evidence type="ECO:0000312" key="4">
    <source>
        <dbReference type="MGI" id="MGI:1890494"/>
    </source>
</evidence>
<organism>
    <name type="scientific">Mus musculus</name>
    <name type="common">Mouse</name>
    <dbReference type="NCBI Taxonomy" id="10090"/>
    <lineage>
        <taxon>Eukaryota</taxon>
        <taxon>Metazoa</taxon>
        <taxon>Chordata</taxon>
        <taxon>Craniata</taxon>
        <taxon>Vertebrata</taxon>
        <taxon>Euteleostomi</taxon>
        <taxon>Mammalia</taxon>
        <taxon>Eutheria</taxon>
        <taxon>Euarchontoglires</taxon>
        <taxon>Glires</taxon>
        <taxon>Rodentia</taxon>
        <taxon>Myomorpha</taxon>
        <taxon>Muroidea</taxon>
        <taxon>Muridae</taxon>
        <taxon>Murinae</taxon>
        <taxon>Mus</taxon>
        <taxon>Mus</taxon>
    </lineage>
</organism>